<gene>
    <name evidence="1" type="primary">rplW</name>
    <name type="ordered locus">LCABL_26680</name>
</gene>
<accession>B3WAL5</accession>
<name>RL23_LACCB</name>
<evidence type="ECO:0000255" key="1">
    <source>
        <dbReference type="HAMAP-Rule" id="MF_01369"/>
    </source>
</evidence>
<evidence type="ECO:0000305" key="2"/>
<proteinExistence type="inferred from homology"/>
<organism>
    <name type="scientific">Lacticaseibacillus casei (strain BL23)</name>
    <name type="common">Lactobacillus casei</name>
    <dbReference type="NCBI Taxonomy" id="543734"/>
    <lineage>
        <taxon>Bacteria</taxon>
        <taxon>Bacillati</taxon>
        <taxon>Bacillota</taxon>
        <taxon>Bacilli</taxon>
        <taxon>Lactobacillales</taxon>
        <taxon>Lactobacillaceae</taxon>
        <taxon>Lacticaseibacillus</taxon>
    </lineage>
</organism>
<feature type="chain" id="PRO_1000144579" description="Large ribosomal subunit protein uL23">
    <location>
        <begin position="1"/>
        <end position="100"/>
    </location>
</feature>
<keyword id="KW-0687">Ribonucleoprotein</keyword>
<keyword id="KW-0689">Ribosomal protein</keyword>
<keyword id="KW-0694">RNA-binding</keyword>
<keyword id="KW-0699">rRNA-binding</keyword>
<sequence length="100" mass="11560">MEARDIILRPIVTEQSMAEMDNRKYTFEVALHATKPQVRKAVEEIFGVKVVNVNIANVRGKKKRQGRYEGMTRRRRKALIALSADSKEIKIFADEDNDKK</sequence>
<dbReference type="EMBL" id="FM177140">
    <property type="protein sequence ID" value="CAQ67734.1"/>
    <property type="molecule type" value="Genomic_DNA"/>
</dbReference>
<dbReference type="SMR" id="B3WAL5"/>
<dbReference type="KEGG" id="lcb:LCABL_26680"/>
<dbReference type="HOGENOM" id="CLU_037562_3_2_9"/>
<dbReference type="GO" id="GO:1990904">
    <property type="term" value="C:ribonucleoprotein complex"/>
    <property type="evidence" value="ECO:0007669"/>
    <property type="project" value="UniProtKB-KW"/>
</dbReference>
<dbReference type="GO" id="GO:0005840">
    <property type="term" value="C:ribosome"/>
    <property type="evidence" value="ECO:0007669"/>
    <property type="project" value="UniProtKB-KW"/>
</dbReference>
<dbReference type="GO" id="GO:0019843">
    <property type="term" value="F:rRNA binding"/>
    <property type="evidence" value="ECO:0007669"/>
    <property type="project" value="UniProtKB-UniRule"/>
</dbReference>
<dbReference type="GO" id="GO:0003735">
    <property type="term" value="F:structural constituent of ribosome"/>
    <property type="evidence" value="ECO:0007669"/>
    <property type="project" value="InterPro"/>
</dbReference>
<dbReference type="GO" id="GO:0006412">
    <property type="term" value="P:translation"/>
    <property type="evidence" value="ECO:0007669"/>
    <property type="project" value="UniProtKB-UniRule"/>
</dbReference>
<dbReference type="FunFam" id="3.30.70.330:FF:000001">
    <property type="entry name" value="50S ribosomal protein L23"/>
    <property type="match status" value="1"/>
</dbReference>
<dbReference type="Gene3D" id="3.30.70.330">
    <property type="match status" value="1"/>
</dbReference>
<dbReference type="HAMAP" id="MF_01369_B">
    <property type="entry name" value="Ribosomal_uL23_B"/>
    <property type="match status" value="1"/>
</dbReference>
<dbReference type="InterPro" id="IPR012677">
    <property type="entry name" value="Nucleotide-bd_a/b_plait_sf"/>
</dbReference>
<dbReference type="InterPro" id="IPR013025">
    <property type="entry name" value="Ribosomal_uL23-like"/>
</dbReference>
<dbReference type="InterPro" id="IPR012678">
    <property type="entry name" value="Ribosomal_uL23/eL15/eS24_sf"/>
</dbReference>
<dbReference type="NCBIfam" id="NF004363">
    <property type="entry name" value="PRK05738.2-4"/>
    <property type="match status" value="1"/>
</dbReference>
<dbReference type="PANTHER" id="PTHR11620">
    <property type="entry name" value="60S RIBOSOMAL PROTEIN L23A"/>
    <property type="match status" value="1"/>
</dbReference>
<dbReference type="Pfam" id="PF00276">
    <property type="entry name" value="Ribosomal_L23"/>
    <property type="match status" value="1"/>
</dbReference>
<dbReference type="SUPFAM" id="SSF54189">
    <property type="entry name" value="Ribosomal proteins S24e, L23 and L15e"/>
    <property type="match status" value="1"/>
</dbReference>
<protein>
    <recommendedName>
        <fullName evidence="1">Large ribosomal subunit protein uL23</fullName>
    </recommendedName>
    <alternativeName>
        <fullName evidence="2">50S ribosomal protein L23</fullName>
    </alternativeName>
</protein>
<comment type="function">
    <text evidence="1">One of the early assembly proteins it binds 23S rRNA. One of the proteins that surrounds the polypeptide exit tunnel on the outside of the ribosome. Forms the main docking site for trigger factor binding to the ribosome.</text>
</comment>
<comment type="subunit">
    <text evidence="1">Part of the 50S ribosomal subunit. Contacts protein L29, and trigger factor when it is bound to the ribosome.</text>
</comment>
<comment type="similarity">
    <text evidence="1">Belongs to the universal ribosomal protein uL23 family.</text>
</comment>
<reference key="1">
    <citation type="submission" date="2008-06" db="EMBL/GenBank/DDBJ databases">
        <title>Lactobacillus casei BL23 complete genome sequence.</title>
        <authorList>
            <person name="Maze A."/>
            <person name="Boel G."/>
            <person name="Bourand A."/>
            <person name="Loux V."/>
            <person name="Gibrat J.F."/>
            <person name="Zuniga M."/>
            <person name="Hartke A."/>
            <person name="Deutscher J."/>
        </authorList>
    </citation>
    <scope>NUCLEOTIDE SEQUENCE [LARGE SCALE GENOMIC DNA]</scope>
    <source>
        <strain>BL23</strain>
    </source>
</reference>